<comment type="function">
    <text evidence="1">One of several proteins that assist in the late maturation steps of the functional core of the 30S ribosomal subunit. Helps release RbfA from mature subunits. May play a role in the assembly of ribosomal proteins into the subunit. Circularly permuted GTPase that catalyzes slow GTP hydrolysis, GTPase activity is stimulated by the 30S ribosomal subunit.</text>
</comment>
<comment type="cofactor">
    <cofactor evidence="1">
        <name>Zn(2+)</name>
        <dbReference type="ChEBI" id="CHEBI:29105"/>
    </cofactor>
    <text evidence="1">Binds 1 zinc ion per subunit.</text>
</comment>
<comment type="subunit">
    <text evidence="1">Monomer. Associates with 30S ribosomal subunit, binds 16S rRNA.</text>
</comment>
<comment type="subcellular location">
    <subcellularLocation>
        <location evidence="1">Cytoplasm</location>
    </subcellularLocation>
</comment>
<comment type="similarity">
    <text evidence="1">Belongs to the TRAFAC class YlqF/YawG GTPase family. RsgA subfamily.</text>
</comment>
<evidence type="ECO:0000255" key="1">
    <source>
        <dbReference type="HAMAP-Rule" id="MF_01820"/>
    </source>
</evidence>
<evidence type="ECO:0000255" key="2">
    <source>
        <dbReference type="PROSITE-ProRule" id="PRU01058"/>
    </source>
</evidence>
<evidence type="ECO:0000256" key="3">
    <source>
        <dbReference type="SAM" id="MobiDB-lite"/>
    </source>
</evidence>
<accession>Q4UYJ6</accession>
<organism>
    <name type="scientific">Xanthomonas campestris pv. campestris (strain 8004)</name>
    <dbReference type="NCBI Taxonomy" id="314565"/>
    <lineage>
        <taxon>Bacteria</taxon>
        <taxon>Pseudomonadati</taxon>
        <taxon>Pseudomonadota</taxon>
        <taxon>Gammaproteobacteria</taxon>
        <taxon>Lysobacterales</taxon>
        <taxon>Lysobacteraceae</taxon>
        <taxon>Xanthomonas</taxon>
    </lineage>
</organism>
<feature type="chain" id="PRO_1000188151" description="Small ribosomal subunit biogenesis GTPase RsgA">
    <location>
        <begin position="1"/>
        <end position="363"/>
    </location>
</feature>
<feature type="domain" description="CP-type G" evidence="2">
    <location>
        <begin position="112"/>
        <end position="268"/>
    </location>
</feature>
<feature type="region of interest" description="Disordered" evidence="3">
    <location>
        <begin position="340"/>
        <end position="363"/>
    </location>
</feature>
<feature type="binding site" evidence="1">
    <location>
        <begin position="157"/>
        <end position="160"/>
    </location>
    <ligand>
        <name>GTP</name>
        <dbReference type="ChEBI" id="CHEBI:37565"/>
    </ligand>
</feature>
<feature type="binding site" evidence="1">
    <location>
        <begin position="210"/>
        <end position="218"/>
    </location>
    <ligand>
        <name>GTP</name>
        <dbReference type="ChEBI" id="CHEBI:37565"/>
    </ligand>
</feature>
<feature type="binding site" evidence="1">
    <location>
        <position position="291"/>
    </location>
    <ligand>
        <name>Zn(2+)</name>
        <dbReference type="ChEBI" id="CHEBI:29105"/>
    </ligand>
</feature>
<feature type="binding site" evidence="1">
    <location>
        <position position="296"/>
    </location>
    <ligand>
        <name>Zn(2+)</name>
        <dbReference type="ChEBI" id="CHEBI:29105"/>
    </ligand>
</feature>
<feature type="binding site" evidence="1">
    <location>
        <position position="298"/>
    </location>
    <ligand>
        <name>Zn(2+)</name>
        <dbReference type="ChEBI" id="CHEBI:29105"/>
    </ligand>
</feature>
<feature type="binding site" evidence="1">
    <location>
        <position position="304"/>
    </location>
    <ligand>
        <name>Zn(2+)</name>
        <dbReference type="ChEBI" id="CHEBI:29105"/>
    </ligand>
</feature>
<protein>
    <recommendedName>
        <fullName evidence="1">Small ribosomal subunit biogenesis GTPase RsgA</fullName>
        <ecNumber evidence="1">3.6.1.-</ecNumber>
    </recommendedName>
</protein>
<sequence>MSDTSPNYHTLQSIGWPWPGPPEDPAWQAIFAAHPQALPARVVEQHRTGYVVADTPEASLKAESLPEWQRPRFPSHERAAVGDWVLMEGKRIVALLPRRTSIKRGAAGEHYHQQVIAANIDTVFIVCGLDADFNPRRIERYLLLVGGGGAEPVVVLTKADQTEYAEDALAVLEELEAQNIALRAVNAKDPESVAALRPWLGDGRTAVLVGSSGAGKSTLTNTLLGTQKMKTNAVRENDSRGRHTTTHRALIPLPSGACLIDTPGMRELKPTGEEDLAEGGFSDVEALAAQCRFNDCAHIAEPGCAVRAAIEADQLDPERVANYMKLRVEVASAAEKLATRVAQNNRGKGSGKRPASVDRPGRR</sequence>
<keyword id="KW-0963">Cytoplasm</keyword>
<keyword id="KW-0342">GTP-binding</keyword>
<keyword id="KW-0378">Hydrolase</keyword>
<keyword id="KW-0479">Metal-binding</keyword>
<keyword id="KW-0547">Nucleotide-binding</keyword>
<keyword id="KW-0690">Ribosome biogenesis</keyword>
<keyword id="KW-0694">RNA-binding</keyword>
<keyword id="KW-0699">rRNA-binding</keyword>
<keyword id="KW-0862">Zinc</keyword>
<gene>
    <name evidence="1" type="primary">rsgA</name>
    <name type="ordered locus">XC_0802</name>
</gene>
<proteinExistence type="inferred from homology"/>
<name>RSGA_XANC8</name>
<dbReference type="EC" id="3.6.1.-" evidence="1"/>
<dbReference type="EMBL" id="CP000050">
    <property type="protein sequence ID" value="AAY47877.1"/>
    <property type="molecule type" value="Genomic_DNA"/>
</dbReference>
<dbReference type="RefSeq" id="WP_011038460.1">
    <property type="nucleotide sequence ID" value="NZ_CP155948.1"/>
</dbReference>
<dbReference type="SMR" id="Q4UYJ6"/>
<dbReference type="KEGG" id="xcb:XC_0802"/>
<dbReference type="HOGENOM" id="CLU_033617_0_1_6"/>
<dbReference type="Proteomes" id="UP000000420">
    <property type="component" value="Chromosome"/>
</dbReference>
<dbReference type="GO" id="GO:0005737">
    <property type="term" value="C:cytoplasm"/>
    <property type="evidence" value="ECO:0007669"/>
    <property type="project" value="UniProtKB-SubCell"/>
</dbReference>
<dbReference type="GO" id="GO:0005525">
    <property type="term" value="F:GTP binding"/>
    <property type="evidence" value="ECO:0007669"/>
    <property type="project" value="UniProtKB-UniRule"/>
</dbReference>
<dbReference type="GO" id="GO:0003924">
    <property type="term" value="F:GTPase activity"/>
    <property type="evidence" value="ECO:0007669"/>
    <property type="project" value="UniProtKB-UniRule"/>
</dbReference>
<dbReference type="GO" id="GO:0046872">
    <property type="term" value="F:metal ion binding"/>
    <property type="evidence" value="ECO:0007669"/>
    <property type="project" value="UniProtKB-KW"/>
</dbReference>
<dbReference type="GO" id="GO:0019843">
    <property type="term" value="F:rRNA binding"/>
    <property type="evidence" value="ECO:0007669"/>
    <property type="project" value="UniProtKB-KW"/>
</dbReference>
<dbReference type="GO" id="GO:0042274">
    <property type="term" value="P:ribosomal small subunit biogenesis"/>
    <property type="evidence" value="ECO:0007669"/>
    <property type="project" value="UniProtKB-UniRule"/>
</dbReference>
<dbReference type="CDD" id="cd01854">
    <property type="entry name" value="YjeQ_EngC"/>
    <property type="match status" value="1"/>
</dbReference>
<dbReference type="Gene3D" id="3.40.50.300">
    <property type="entry name" value="P-loop containing nucleotide triphosphate hydrolases"/>
    <property type="match status" value="1"/>
</dbReference>
<dbReference type="Gene3D" id="1.10.40.50">
    <property type="entry name" value="Probable gtpase engc, domain 3"/>
    <property type="match status" value="1"/>
</dbReference>
<dbReference type="HAMAP" id="MF_01820">
    <property type="entry name" value="GTPase_RsgA"/>
    <property type="match status" value="1"/>
</dbReference>
<dbReference type="InterPro" id="IPR030378">
    <property type="entry name" value="G_CP_dom"/>
</dbReference>
<dbReference type="InterPro" id="IPR027417">
    <property type="entry name" value="P-loop_NTPase"/>
</dbReference>
<dbReference type="InterPro" id="IPR004881">
    <property type="entry name" value="Ribosome_biogen_GTPase_RsgA"/>
</dbReference>
<dbReference type="InterPro" id="IPR010914">
    <property type="entry name" value="RsgA_GTPase_dom"/>
</dbReference>
<dbReference type="NCBIfam" id="TIGR00157">
    <property type="entry name" value="ribosome small subunit-dependent GTPase A"/>
    <property type="match status" value="1"/>
</dbReference>
<dbReference type="PANTHER" id="PTHR32120">
    <property type="entry name" value="SMALL RIBOSOMAL SUBUNIT BIOGENESIS GTPASE RSGA"/>
    <property type="match status" value="1"/>
</dbReference>
<dbReference type="PANTHER" id="PTHR32120:SF10">
    <property type="entry name" value="SMALL RIBOSOMAL SUBUNIT BIOGENESIS GTPASE RSGA"/>
    <property type="match status" value="1"/>
</dbReference>
<dbReference type="Pfam" id="PF03193">
    <property type="entry name" value="RsgA_GTPase"/>
    <property type="match status" value="1"/>
</dbReference>
<dbReference type="SUPFAM" id="SSF52540">
    <property type="entry name" value="P-loop containing nucleoside triphosphate hydrolases"/>
    <property type="match status" value="1"/>
</dbReference>
<dbReference type="PROSITE" id="PS50936">
    <property type="entry name" value="ENGC_GTPASE"/>
    <property type="match status" value="1"/>
</dbReference>
<dbReference type="PROSITE" id="PS51721">
    <property type="entry name" value="G_CP"/>
    <property type="match status" value="1"/>
</dbReference>
<reference key="1">
    <citation type="journal article" date="2005" name="Genome Res.">
        <title>Comparative and functional genomic analyses of the pathogenicity of phytopathogen Xanthomonas campestris pv. campestris.</title>
        <authorList>
            <person name="Qian W."/>
            <person name="Jia Y."/>
            <person name="Ren S.-X."/>
            <person name="He Y.-Q."/>
            <person name="Feng J.-X."/>
            <person name="Lu L.-F."/>
            <person name="Sun Q."/>
            <person name="Ying G."/>
            <person name="Tang D.-J."/>
            <person name="Tang H."/>
            <person name="Wu W."/>
            <person name="Hao P."/>
            <person name="Wang L."/>
            <person name="Jiang B.-L."/>
            <person name="Zeng S."/>
            <person name="Gu W.-Y."/>
            <person name="Lu G."/>
            <person name="Rong L."/>
            <person name="Tian Y."/>
            <person name="Yao Z."/>
            <person name="Fu G."/>
            <person name="Chen B."/>
            <person name="Fang R."/>
            <person name="Qiang B."/>
            <person name="Chen Z."/>
            <person name="Zhao G.-P."/>
            <person name="Tang J.-L."/>
            <person name="He C."/>
        </authorList>
    </citation>
    <scope>NUCLEOTIDE SEQUENCE [LARGE SCALE GENOMIC DNA]</scope>
    <source>
        <strain>8004</strain>
    </source>
</reference>